<gene>
    <name evidence="1" type="primary">aat</name>
    <name type="ordered locus">SG0898</name>
</gene>
<name>LFTR_SALG2</name>
<feature type="chain" id="PRO_1000131947" description="Leucyl/phenylalanyl-tRNA--protein transferase">
    <location>
        <begin position="1"/>
        <end position="234"/>
    </location>
</feature>
<dbReference type="EC" id="2.3.2.6" evidence="1"/>
<dbReference type="EMBL" id="AM933173">
    <property type="protein sequence ID" value="CAR36788.1"/>
    <property type="molecule type" value="Genomic_DNA"/>
</dbReference>
<dbReference type="RefSeq" id="WP_001241649.1">
    <property type="nucleotide sequence ID" value="NC_011274.1"/>
</dbReference>
<dbReference type="SMR" id="B5R8H3"/>
<dbReference type="KEGG" id="seg:SG0898"/>
<dbReference type="HOGENOM" id="CLU_075045_0_0_6"/>
<dbReference type="Proteomes" id="UP000008321">
    <property type="component" value="Chromosome"/>
</dbReference>
<dbReference type="GO" id="GO:0005737">
    <property type="term" value="C:cytoplasm"/>
    <property type="evidence" value="ECO:0007669"/>
    <property type="project" value="UniProtKB-SubCell"/>
</dbReference>
<dbReference type="GO" id="GO:0008914">
    <property type="term" value="F:leucyl-tRNA--protein transferase activity"/>
    <property type="evidence" value="ECO:0007669"/>
    <property type="project" value="UniProtKB-UniRule"/>
</dbReference>
<dbReference type="GO" id="GO:0030163">
    <property type="term" value="P:protein catabolic process"/>
    <property type="evidence" value="ECO:0007669"/>
    <property type="project" value="UniProtKB-UniRule"/>
</dbReference>
<dbReference type="FunFam" id="3.30.70.3550:FF:000001">
    <property type="entry name" value="Leucyl/phenylalanyl-tRNA--protein transferase"/>
    <property type="match status" value="1"/>
</dbReference>
<dbReference type="FunFam" id="3.40.630.70:FF:000001">
    <property type="entry name" value="Leucyl/phenylalanyl-tRNA--protein transferase"/>
    <property type="match status" value="1"/>
</dbReference>
<dbReference type="Gene3D" id="3.40.630.70">
    <property type="entry name" value="Leucyl/phenylalanyl-tRNA-protein transferase, C-terminal domain"/>
    <property type="match status" value="1"/>
</dbReference>
<dbReference type="Gene3D" id="3.30.70.3550">
    <property type="entry name" value="Leucyl/phenylalanyl-tRNA-protein transferase, N-terminal domain"/>
    <property type="match status" value="1"/>
</dbReference>
<dbReference type="HAMAP" id="MF_00688">
    <property type="entry name" value="Leu_Phe_trans"/>
    <property type="match status" value="1"/>
</dbReference>
<dbReference type="InterPro" id="IPR016181">
    <property type="entry name" value="Acyl_CoA_acyltransferase"/>
</dbReference>
<dbReference type="InterPro" id="IPR004616">
    <property type="entry name" value="Leu/Phe-tRNA_Trfase"/>
</dbReference>
<dbReference type="InterPro" id="IPR042203">
    <property type="entry name" value="Leu/Phe-tRNA_Trfase_C"/>
</dbReference>
<dbReference type="InterPro" id="IPR042221">
    <property type="entry name" value="Leu/Phe-tRNA_Trfase_N"/>
</dbReference>
<dbReference type="NCBIfam" id="TIGR00667">
    <property type="entry name" value="aat"/>
    <property type="match status" value="1"/>
</dbReference>
<dbReference type="PANTHER" id="PTHR30098">
    <property type="entry name" value="LEUCYL/PHENYLALANYL-TRNA--PROTEIN TRANSFERASE"/>
    <property type="match status" value="1"/>
</dbReference>
<dbReference type="PANTHER" id="PTHR30098:SF2">
    <property type="entry name" value="LEUCYL_PHENYLALANYL-TRNA--PROTEIN TRANSFERASE"/>
    <property type="match status" value="1"/>
</dbReference>
<dbReference type="Pfam" id="PF03588">
    <property type="entry name" value="Leu_Phe_trans"/>
    <property type="match status" value="1"/>
</dbReference>
<dbReference type="SUPFAM" id="SSF55729">
    <property type="entry name" value="Acyl-CoA N-acyltransferases (Nat)"/>
    <property type="match status" value="1"/>
</dbReference>
<proteinExistence type="inferred from homology"/>
<evidence type="ECO:0000255" key="1">
    <source>
        <dbReference type="HAMAP-Rule" id="MF_00688"/>
    </source>
</evidence>
<accession>B5R8H3</accession>
<organism>
    <name type="scientific">Salmonella gallinarum (strain 287/91 / NCTC 13346)</name>
    <dbReference type="NCBI Taxonomy" id="550538"/>
    <lineage>
        <taxon>Bacteria</taxon>
        <taxon>Pseudomonadati</taxon>
        <taxon>Pseudomonadota</taxon>
        <taxon>Gammaproteobacteria</taxon>
        <taxon>Enterobacterales</taxon>
        <taxon>Enterobacteriaceae</taxon>
        <taxon>Salmonella</taxon>
    </lineage>
</organism>
<keyword id="KW-0012">Acyltransferase</keyword>
<keyword id="KW-0963">Cytoplasm</keyword>
<keyword id="KW-0808">Transferase</keyword>
<protein>
    <recommendedName>
        <fullName evidence="1">Leucyl/phenylalanyl-tRNA--protein transferase</fullName>
        <ecNumber evidence="1">2.3.2.6</ecNumber>
    </recommendedName>
    <alternativeName>
        <fullName evidence="1">L/F-transferase</fullName>
    </alternativeName>
    <alternativeName>
        <fullName evidence="1">Leucyltransferase</fullName>
    </alternativeName>
    <alternativeName>
        <fullName evidence="1">Phenyalanyltransferase</fullName>
    </alternativeName>
</protein>
<reference key="1">
    <citation type="journal article" date="2008" name="Genome Res.">
        <title>Comparative genome analysis of Salmonella enteritidis PT4 and Salmonella gallinarum 287/91 provides insights into evolutionary and host adaptation pathways.</title>
        <authorList>
            <person name="Thomson N.R."/>
            <person name="Clayton D.J."/>
            <person name="Windhorst D."/>
            <person name="Vernikos G."/>
            <person name="Davidson S."/>
            <person name="Churcher C."/>
            <person name="Quail M.A."/>
            <person name="Stevens M."/>
            <person name="Jones M.A."/>
            <person name="Watson M."/>
            <person name="Barron A."/>
            <person name="Layton A."/>
            <person name="Pickard D."/>
            <person name="Kingsley R.A."/>
            <person name="Bignell A."/>
            <person name="Clark L."/>
            <person name="Harris B."/>
            <person name="Ormond D."/>
            <person name="Abdellah Z."/>
            <person name="Brooks K."/>
            <person name="Cherevach I."/>
            <person name="Chillingworth T."/>
            <person name="Woodward J."/>
            <person name="Norberczak H."/>
            <person name="Lord A."/>
            <person name="Arrowsmith C."/>
            <person name="Jagels K."/>
            <person name="Moule S."/>
            <person name="Mungall K."/>
            <person name="Saunders M."/>
            <person name="Whitehead S."/>
            <person name="Chabalgoity J.A."/>
            <person name="Maskell D."/>
            <person name="Humphreys T."/>
            <person name="Roberts M."/>
            <person name="Barrow P.A."/>
            <person name="Dougan G."/>
            <person name="Parkhill J."/>
        </authorList>
    </citation>
    <scope>NUCLEOTIDE SEQUENCE [LARGE SCALE GENOMIC DNA]</scope>
    <source>
        <strain>287/91 / NCTC 13346</strain>
    </source>
</reference>
<sequence length="234" mass="26685">MRLVQLSRHSIAFPSPEGALREPNGLLALGGDLSPARLLMAYQHGIFPWFSPGDPILWWSPDPRAVLWPEKFHLSRSMKRFHNASPYRVTLNYAFDRVIDGCANHRDEGTWITRGIEEAYRRLHELGHAHSIEVWRDRELVGGMYGVSQGALFCGESMFSRQENASKTALLVFCAEFIRHGGKLIDCQVLNSHTASLGAIEIPRRDYLDHLAALRQQPLASRFWVPRTLFLPRK</sequence>
<comment type="function">
    <text evidence="1">Functions in the N-end rule pathway of protein degradation where it conjugates Leu, Phe and, less efficiently, Met from aminoacyl-tRNAs to the N-termini of proteins containing an N-terminal arginine or lysine.</text>
</comment>
<comment type="catalytic activity">
    <reaction evidence="1">
        <text>N-terminal L-lysyl-[protein] + L-leucyl-tRNA(Leu) = N-terminal L-leucyl-L-lysyl-[protein] + tRNA(Leu) + H(+)</text>
        <dbReference type="Rhea" id="RHEA:12340"/>
        <dbReference type="Rhea" id="RHEA-COMP:9613"/>
        <dbReference type="Rhea" id="RHEA-COMP:9622"/>
        <dbReference type="Rhea" id="RHEA-COMP:12670"/>
        <dbReference type="Rhea" id="RHEA-COMP:12671"/>
        <dbReference type="ChEBI" id="CHEBI:15378"/>
        <dbReference type="ChEBI" id="CHEBI:65249"/>
        <dbReference type="ChEBI" id="CHEBI:78442"/>
        <dbReference type="ChEBI" id="CHEBI:78494"/>
        <dbReference type="ChEBI" id="CHEBI:133043"/>
        <dbReference type="EC" id="2.3.2.6"/>
    </reaction>
</comment>
<comment type="catalytic activity">
    <reaction evidence="1">
        <text>N-terminal L-arginyl-[protein] + L-leucyl-tRNA(Leu) = N-terminal L-leucyl-L-arginyl-[protein] + tRNA(Leu) + H(+)</text>
        <dbReference type="Rhea" id="RHEA:50416"/>
        <dbReference type="Rhea" id="RHEA-COMP:9613"/>
        <dbReference type="Rhea" id="RHEA-COMP:9622"/>
        <dbReference type="Rhea" id="RHEA-COMP:12672"/>
        <dbReference type="Rhea" id="RHEA-COMP:12673"/>
        <dbReference type="ChEBI" id="CHEBI:15378"/>
        <dbReference type="ChEBI" id="CHEBI:64719"/>
        <dbReference type="ChEBI" id="CHEBI:78442"/>
        <dbReference type="ChEBI" id="CHEBI:78494"/>
        <dbReference type="ChEBI" id="CHEBI:133044"/>
        <dbReference type="EC" id="2.3.2.6"/>
    </reaction>
</comment>
<comment type="catalytic activity">
    <reaction evidence="1">
        <text>L-phenylalanyl-tRNA(Phe) + an N-terminal L-alpha-aminoacyl-[protein] = an N-terminal L-phenylalanyl-L-alpha-aminoacyl-[protein] + tRNA(Phe)</text>
        <dbReference type="Rhea" id="RHEA:43632"/>
        <dbReference type="Rhea" id="RHEA-COMP:9668"/>
        <dbReference type="Rhea" id="RHEA-COMP:9699"/>
        <dbReference type="Rhea" id="RHEA-COMP:10636"/>
        <dbReference type="Rhea" id="RHEA-COMP:10637"/>
        <dbReference type="ChEBI" id="CHEBI:78442"/>
        <dbReference type="ChEBI" id="CHEBI:78531"/>
        <dbReference type="ChEBI" id="CHEBI:78597"/>
        <dbReference type="ChEBI" id="CHEBI:83561"/>
        <dbReference type="EC" id="2.3.2.6"/>
    </reaction>
</comment>
<comment type="subcellular location">
    <subcellularLocation>
        <location evidence="1">Cytoplasm</location>
    </subcellularLocation>
</comment>
<comment type="similarity">
    <text evidence="1">Belongs to the L/F-transferase family.</text>
</comment>